<feature type="chain" id="PRO_0000188122" description="ATP synthase epsilon chain">
    <location>
        <begin position="1"/>
        <end position="133"/>
    </location>
</feature>
<dbReference type="EMBL" id="AF101055">
    <property type="protein sequence ID" value="AAD16427.1"/>
    <property type="molecule type" value="Genomic_DNA"/>
</dbReference>
<dbReference type="EMBL" id="AE001437">
    <property type="protein sequence ID" value="AAK80807.1"/>
    <property type="molecule type" value="Genomic_DNA"/>
</dbReference>
<dbReference type="PIR" id="D97252">
    <property type="entry name" value="D97252"/>
</dbReference>
<dbReference type="RefSeq" id="NP_349467.1">
    <property type="nucleotide sequence ID" value="NC_003030.1"/>
</dbReference>
<dbReference type="RefSeq" id="WP_010966148.1">
    <property type="nucleotide sequence ID" value="NC_003030.1"/>
</dbReference>
<dbReference type="SMR" id="Q9Z686"/>
<dbReference type="STRING" id="272562.CA_C2864"/>
<dbReference type="KEGG" id="cac:CA_C2864"/>
<dbReference type="PATRIC" id="fig|272562.8.peg.3048"/>
<dbReference type="eggNOG" id="COG0355">
    <property type="taxonomic scope" value="Bacteria"/>
</dbReference>
<dbReference type="HOGENOM" id="CLU_084338_1_3_9"/>
<dbReference type="OrthoDB" id="9804110at2"/>
<dbReference type="Proteomes" id="UP000000814">
    <property type="component" value="Chromosome"/>
</dbReference>
<dbReference type="GO" id="GO:0005886">
    <property type="term" value="C:plasma membrane"/>
    <property type="evidence" value="ECO:0007669"/>
    <property type="project" value="UniProtKB-SubCell"/>
</dbReference>
<dbReference type="GO" id="GO:0045259">
    <property type="term" value="C:proton-transporting ATP synthase complex"/>
    <property type="evidence" value="ECO:0007669"/>
    <property type="project" value="UniProtKB-KW"/>
</dbReference>
<dbReference type="GO" id="GO:0005524">
    <property type="term" value="F:ATP binding"/>
    <property type="evidence" value="ECO:0007669"/>
    <property type="project" value="UniProtKB-UniRule"/>
</dbReference>
<dbReference type="GO" id="GO:0046933">
    <property type="term" value="F:proton-transporting ATP synthase activity, rotational mechanism"/>
    <property type="evidence" value="ECO:0007669"/>
    <property type="project" value="UniProtKB-UniRule"/>
</dbReference>
<dbReference type="CDD" id="cd12152">
    <property type="entry name" value="F1-ATPase_delta"/>
    <property type="match status" value="1"/>
</dbReference>
<dbReference type="Gene3D" id="1.20.5.440">
    <property type="entry name" value="ATP synthase delta/epsilon subunit, C-terminal domain"/>
    <property type="match status" value="1"/>
</dbReference>
<dbReference type="Gene3D" id="2.60.15.10">
    <property type="entry name" value="F0F1 ATP synthase delta/epsilon subunit, N-terminal"/>
    <property type="match status" value="1"/>
</dbReference>
<dbReference type="HAMAP" id="MF_00530">
    <property type="entry name" value="ATP_synth_epsil_bac"/>
    <property type="match status" value="1"/>
</dbReference>
<dbReference type="InterPro" id="IPR036794">
    <property type="entry name" value="ATP_F1_dsu/esu_C_sf"/>
</dbReference>
<dbReference type="InterPro" id="IPR001469">
    <property type="entry name" value="ATP_synth_F1_dsu/esu"/>
</dbReference>
<dbReference type="InterPro" id="IPR020546">
    <property type="entry name" value="ATP_synth_F1_dsu/esu_N"/>
</dbReference>
<dbReference type="InterPro" id="IPR020547">
    <property type="entry name" value="ATP_synth_F1_esu_C"/>
</dbReference>
<dbReference type="InterPro" id="IPR036771">
    <property type="entry name" value="ATPsynth_dsu/esu_N"/>
</dbReference>
<dbReference type="NCBIfam" id="TIGR01216">
    <property type="entry name" value="ATP_synt_epsi"/>
    <property type="match status" value="1"/>
</dbReference>
<dbReference type="NCBIfam" id="NF009984">
    <property type="entry name" value="PRK13450.1"/>
    <property type="match status" value="1"/>
</dbReference>
<dbReference type="PANTHER" id="PTHR13822">
    <property type="entry name" value="ATP SYNTHASE DELTA/EPSILON CHAIN"/>
    <property type="match status" value="1"/>
</dbReference>
<dbReference type="PANTHER" id="PTHR13822:SF10">
    <property type="entry name" value="ATP SYNTHASE EPSILON CHAIN, CHLOROPLASTIC"/>
    <property type="match status" value="1"/>
</dbReference>
<dbReference type="Pfam" id="PF00401">
    <property type="entry name" value="ATP-synt_DE"/>
    <property type="match status" value="1"/>
</dbReference>
<dbReference type="Pfam" id="PF02823">
    <property type="entry name" value="ATP-synt_DE_N"/>
    <property type="match status" value="1"/>
</dbReference>
<dbReference type="SUPFAM" id="SSF46604">
    <property type="entry name" value="Epsilon subunit of F1F0-ATP synthase C-terminal domain"/>
    <property type="match status" value="1"/>
</dbReference>
<dbReference type="SUPFAM" id="SSF51344">
    <property type="entry name" value="Epsilon subunit of F1F0-ATP synthase N-terminal domain"/>
    <property type="match status" value="1"/>
</dbReference>
<protein>
    <recommendedName>
        <fullName>ATP synthase epsilon chain</fullName>
    </recommendedName>
    <alternativeName>
        <fullName>ATP synthase F1 sector epsilon subunit</fullName>
    </alternativeName>
    <alternativeName>
        <fullName>F-ATPase epsilon subunit</fullName>
    </alternativeName>
</protein>
<reference key="1">
    <citation type="journal article" date="2000" name="DNA Seq.">
        <title>Sequence analysis of the atp operon of Clostridium acetobutylicum DSM 792 encoding the F0F1 ATP synthase.</title>
        <authorList>
            <person name="Externbrink T."/>
            <person name="Hujer S."/>
            <person name="Winzer K."/>
            <person name="Duerre P."/>
        </authorList>
    </citation>
    <scope>NUCLEOTIDE SEQUENCE [GENOMIC DNA]</scope>
    <source>
        <strain>ATCC 824 / DSM 792 / JCM 1419 / IAM 19013 / LMG 5710 / NBRC 13948 / NRRL B-527 / VKM B-1787 / 2291 / W</strain>
    </source>
</reference>
<reference key="2">
    <citation type="journal article" date="2001" name="J. Bacteriol.">
        <title>Genome sequence and comparative analysis of the solvent-producing bacterium Clostridium acetobutylicum.</title>
        <authorList>
            <person name="Noelling J."/>
            <person name="Breton G."/>
            <person name="Omelchenko M.V."/>
            <person name="Makarova K.S."/>
            <person name="Zeng Q."/>
            <person name="Gibson R."/>
            <person name="Lee H.M."/>
            <person name="Dubois J."/>
            <person name="Qiu D."/>
            <person name="Hitti J."/>
            <person name="Wolf Y.I."/>
            <person name="Tatusov R.L."/>
            <person name="Sabathe F."/>
            <person name="Doucette-Stamm L.A."/>
            <person name="Soucaille P."/>
            <person name="Daly M.J."/>
            <person name="Bennett G.N."/>
            <person name="Koonin E.V."/>
            <person name="Smith D.R."/>
        </authorList>
    </citation>
    <scope>NUCLEOTIDE SEQUENCE [LARGE SCALE GENOMIC DNA]</scope>
    <source>
        <strain>ATCC 824 / DSM 792 / JCM 1419 / IAM 19013 / LMG 5710 / NBRC 13948 / NRRL B-527 / VKM B-1787 / 2291 / W</strain>
    </source>
</reference>
<sequence>MANNIKLSILTPQKTFYVGDVKEIITRTVEGEIGILPNHTDLVAFLTPTETILVEEDGSRKKVFTSTGILNVGESEVSFMCDASEWPDEIDIQRAETAKERAEKRLKTSNNIDVKRAELSLSRALARIKTKND</sequence>
<proteinExistence type="inferred from homology"/>
<keyword id="KW-0066">ATP synthesis</keyword>
<keyword id="KW-1003">Cell membrane</keyword>
<keyword id="KW-0139">CF(1)</keyword>
<keyword id="KW-0375">Hydrogen ion transport</keyword>
<keyword id="KW-0406">Ion transport</keyword>
<keyword id="KW-0472">Membrane</keyword>
<keyword id="KW-1185">Reference proteome</keyword>
<keyword id="KW-0813">Transport</keyword>
<gene>
    <name type="primary">atpC</name>
    <name type="ordered locus">CA_C2864</name>
</gene>
<comment type="function">
    <text evidence="1">Produces ATP from ADP in the presence of a proton gradient across the membrane.</text>
</comment>
<comment type="subunit">
    <text>F-type ATPases have 2 components, CF(1) - the catalytic core - and CF(0) - the membrane proton channel. CF(1) has five subunits: alpha(3), beta(3), gamma(1), delta(1), epsilon(1). CF(0) has three main subunits: a, b and c.</text>
</comment>
<comment type="subcellular location">
    <subcellularLocation>
        <location evidence="1">Cell membrane</location>
        <topology evidence="1">Peripheral membrane protein</topology>
    </subcellularLocation>
</comment>
<comment type="similarity">
    <text evidence="2">Belongs to the ATPase epsilon chain family.</text>
</comment>
<accession>Q9Z686</accession>
<organism>
    <name type="scientific">Clostridium acetobutylicum (strain ATCC 824 / DSM 792 / JCM 1419 / IAM 19013 / LMG 5710 / NBRC 13948 / NRRL B-527 / VKM B-1787 / 2291 / W)</name>
    <dbReference type="NCBI Taxonomy" id="272562"/>
    <lineage>
        <taxon>Bacteria</taxon>
        <taxon>Bacillati</taxon>
        <taxon>Bacillota</taxon>
        <taxon>Clostridia</taxon>
        <taxon>Eubacteriales</taxon>
        <taxon>Clostridiaceae</taxon>
        <taxon>Clostridium</taxon>
    </lineage>
</organism>
<evidence type="ECO:0000250" key="1"/>
<evidence type="ECO:0000305" key="2"/>
<name>ATPE_CLOAB</name>